<protein>
    <recommendedName>
        <fullName>Nuclear protein UL4 homolog</fullName>
    </recommendedName>
    <alternativeName>
        <fullName>ORF56 protein</fullName>
    </alternativeName>
</protein>
<feature type="chain" id="PRO_0000115902" description="Nuclear protein UL4 homolog">
    <location>
        <begin position="1"/>
        <end position="244"/>
    </location>
</feature>
<feature type="region of interest" description="Disordered" evidence="2">
    <location>
        <begin position="193"/>
        <end position="227"/>
    </location>
</feature>
<feature type="compositionally biased region" description="Polar residues" evidence="2">
    <location>
        <begin position="205"/>
        <end position="220"/>
    </location>
</feature>
<dbReference type="EMBL" id="X04370">
    <property type="protein sequence ID" value="CAA27939.1"/>
    <property type="molecule type" value="Genomic_DNA"/>
</dbReference>
<dbReference type="PIR" id="D27215">
    <property type="entry name" value="WZBE56"/>
</dbReference>
<dbReference type="Proteomes" id="UP000002602">
    <property type="component" value="Genome"/>
</dbReference>
<dbReference type="GO" id="GO:0042025">
    <property type="term" value="C:host cell nucleus"/>
    <property type="evidence" value="ECO:0007669"/>
    <property type="project" value="UniProtKB-SubCell"/>
</dbReference>
<dbReference type="InterPro" id="IPR004958">
    <property type="entry name" value="Herpes_UL4"/>
</dbReference>
<dbReference type="Pfam" id="PF03277">
    <property type="entry name" value="Herpes_UL4"/>
    <property type="match status" value="1"/>
</dbReference>
<sequence length="244" mass="27167">MKNPQKLAITFLPLYVIPTYTLCIKALYKNTHAGLLFSFLGFVLNTPAMSISGPPTTFILYRLHGVRRVLHWTLPDHEQTLYAFTGGSRSMAVKTDARCDTMSGGMIVLQHTHTVTLLTIDCSTDFSSYAFTHRDFHLQDKPHATFAMPFMSWVGSDPTSQLYSNVGGVLSVITEDDLSMCISIVIYGLRVNRPDDQTTPTPTPHQYTSQRRQPETNCPSSPQPAFFTSDDDVLSLILRDAANA</sequence>
<accession>P09304</accession>
<comment type="subcellular location">
    <subcellularLocation>
        <location evidence="1">Host nucleus</location>
    </subcellularLocation>
</comment>
<comment type="similarity">
    <text evidence="3">Belongs to the alphaherpesvirinae HHV-1 UL4 family.</text>
</comment>
<keyword id="KW-1048">Host nucleus</keyword>
<keyword id="KW-1185">Reference proteome</keyword>
<evidence type="ECO:0000250" key="1"/>
<evidence type="ECO:0000256" key="2">
    <source>
        <dbReference type="SAM" id="MobiDB-lite"/>
    </source>
</evidence>
<evidence type="ECO:0000305" key="3"/>
<organism>
    <name type="scientific">Varicella-zoster virus (strain Dumas)</name>
    <name type="common">HHV-3</name>
    <name type="synonym">Human herpesvirus 3</name>
    <dbReference type="NCBI Taxonomy" id="10338"/>
    <lineage>
        <taxon>Viruses</taxon>
        <taxon>Duplodnaviria</taxon>
        <taxon>Heunggongvirae</taxon>
        <taxon>Peploviricota</taxon>
        <taxon>Herviviricetes</taxon>
        <taxon>Herpesvirales</taxon>
        <taxon>Orthoherpesviridae</taxon>
        <taxon>Alphaherpesvirinae</taxon>
        <taxon>Varicellovirus</taxon>
        <taxon>Varicellovirus humanalpha3</taxon>
        <taxon>Human herpesvirus 3</taxon>
    </lineage>
</organism>
<proteinExistence type="inferred from homology"/>
<gene>
    <name type="ORF">ORF56</name>
</gene>
<organismHost>
    <name type="scientific">Homo sapiens</name>
    <name type="common">Human</name>
    <dbReference type="NCBI Taxonomy" id="9606"/>
</organismHost>
<reference key="1">
    <citation type="journal article" date="1986" name="J. Gen. Virol.">
        <title>The complete DNA sequence of varicella-zoster virus.</title>
        <authorList>
            <person name="Davison A.J."/>
            <person name="Scott J.E."/>
        </authorList>
    </citation>
    <scope>NUCLEOTIDE SEQUENCE [LARGE SCALE GENOMIC DNA]</scope>
</reference>
<name>NP04_VZVD</name>